<sequence>MKKILVTGGTGFIGSHTVVSLLKSGHQVVILDNLCNSSINILPRLKTITGQEIPFYQGDIRDREILRRIFAENRIDSVIHFAGLKAVGESVAEPMKYYDNNVSGSLVLAEEMARAGVFKIVFSSSATVYGDPGKVPYTEDMQPGDTTSPYGTSKSMVERILSDIQKADPRWSVILLRYFNPIGAHESGLIGEQPNGIPNNLLPYICQVAAGKLPQLAVFGGDYPTPDGTGMRDYIHVMDLAEGHVAAMQAKSNVAGTHLLNLGSGRASSVLEIIRAFEAASGLTIPYEVKPRRAGDLACFYADPSYAKAQIGWQTQRDLTQMMEDSWRWVSNNPNGYDD</sequence>
<protein>
    <recommendedName>
        <fullName>UDP-glucose 4-epimerase</fullName>
        <ecNumber>5.1.3.2</ecNumber>
    </recommendedName>
    <alternativeName>
        <fullName>Galactowaldenase</fullName>
    </alternativeName>
    <alternativeName>
        <fullName>UDP-galactose 4-epimerase</fullName>
    </alternativeName>
</protein>
<organism>
    <name type="scientific">Neisseria meningitidis serogroup C</name>
    <dbReference type="NCBI Taxonomy" id="135720"/>
    <lineage>
        <taxon>Bacteria</taxon>
        <taxon>Pseudomonadati</taxon>
        <taxon>Pseudomonadota</taxon>
        <taxon>Betaproteobacteria</taxon>
        <taxon>Neisseriales</taxon>
        <taxon>Neisseriaceae</taxon>
        <taxon>Neisseria</taxon>
    </lineage>
</organism>
<feature type="chain" id="PRO_0000183214" description="UDP-glucose 4-epimerase">
    <location>
        <begin position="1"/>
        <end position="339"/>
    </location>
</feature>
<feature type="active site" description="Proton acceptor" evidence="1">
    <location>
        <position position="150"/>
    </location>
</feature>
<feature type="binding site" evidence="1">
    <location>
        <begin position="12"/>
        <end position="13"/>
    </location>
    <ligand>
        <name>NAD(+)</name>
        <dbReference type="ChEBI" id="CHEBI:57540"/>
    </ligand>
</feature>
<feature type="binding site" evidence="1">
    <location>
        <begin position="32"/>
        <end position="37"/>
    </location>
    <ligand>
        <name>NAD(+)</name>
        <dbReference type="ChEBI" id="CHEBI:57540"/>
    </ligand>
</feature>
<feature type="binding site" evidence="1">
    <location>
        <begin position="59"/>
        <end position="60"/>
    </location>
    <ligand>
        <name>NAD(+)</name>
        <dbReference type="ChEBI" id="CHEBI:57540"/>
    </ligand>
</feature>
<feature type="binding site" evidence="1">
    <location>
        <begin position="81"/>
        <end position="85"/>
    </location>
    <ligand>
        <name>NAD(+)</name>
        <dbReference type="ChEBI" id="CHEBI:57540"/>
    </ligand>
</feature>
<feature type="binding site" evidence="1">
    <location>
        <position position="100"/>
    </location>
    <ligand>
        <name>NAD(+)</name>
        <dbReference type="ChEBI" id="CHEBI:57540"/>
    </ligand>
</feature>
<feature type="binding site" evidence="1">
    <location>
        <position position="125"/>
    </location>
    <ligand>
        <name>NAD(+)</name>
        <dbReference type="ChEBI" id="CHEBI:57540"/>
    </ligand>
</feature>
<feature type="binding site" evidence="1">
    <location>
        <position position="125"/>
    </location>
    <ligand>
        <name>substrate</name>
    </ligand>
</feature>
<feature type="binding site" evidence="1">
    <location>
        <position position="150"/>
    </location>
    <ligand>
        <name>NAD(+)</name>
        <dbReference type="ChEBI" id="CHEBI:57540"/>
    </ligand>
</feature>
<feature type="binding site" evidence="1">
    <location>
        <position position="150"/>
    </location>
    <ligand>
        <name>substrate</name>
    </ligand>
</feature>
<feature type="binding site" evidence="1">
    <location>
        <position position="154"/>
    </location>
    <ligand>
        <name>NAD(+)</name>
        <dbReference type="ChEBI" id="CHEBI:57540"/>
    </ligand>
</feature>
<feature type="binding site" evidence="1">
    <location>
        <position position="179"/>
    </location>
    <ligand>
        <name>NAD(+)</name>
        <dbReference type="ChEBI" id="CHEBI:57540"/>
    </ligand>
</feature>
<feature type="binding site" evidence="1">
    <location>
        <position position="180"/>
    </location>
    <ligand>
        <name>substrate</name>
    </ligand>
</feature>
<feature type="binding site" evidence="1">
    <location>
        <begin position="200"/>
        <end position="201"/>
    </location>
    <ligand>
        <name>substrate</name>
    </ligand>
</feature>
<feature type="binding site" evidence="1">
    <location>
        <begin position="217"/>
        <end position="219"/>
    </location>
    <ligand>
        <name>substrate</name>
    </ligand>
</feature>
<feature type="binding site" evidence="1">
    <location>
        <position position="232"/>
    </location>
    <ligand>
        <name>substrate</name>
    </ligand>
</feature>
<feature type="binding site" evidence="1">
    <location>
        <begin position="293"/>
        <end position="296"/>
    </location>
    <ligand>
        <name>substrate</name>
    </ligand>
</feature>
<dbReference type="EC" id="5.1.3.2"/>
<dbReference type="EMBL" id="U19895">
    <property type="protein sequence ID" value="AAA86716.1"/>
    <property type="molecule type" value="Genomic_DNA"/>
</dbReference>
<dbReference type="SMR" id="P56986"/>
<dbReference type="UniPathway" id="UPA00214"/>
<dbReference type="GO" id="GO:0005829">
    <property type="term" value="C:cytosol"/>
    <property type="evidence" value="ECO:0007669"/>
    <property type="project" value="TreeGrafter"/>
</dbReference>
<dbReference type="GO" id="GO:0003978">
    <property type="term" value="F:UDP-glucose 4-epimerase activity"/>
    <property type="evidence" value="ECO:0007669"/>
    <property type="project" value="UniProtKB-EC"/>
</dbReference>
<dbReference type="GO" id="GO:0006012">
    <property type="term" value="P:galactose metabolic process"/>
    <property type="evidence" value="ECO:0007669"/>
    <property type="project" value="UniProtKB-UniPathway"/>
</dbReference>
<dbReference type="CDD" id="cd05247">
    <property type="entry name" value="UDP_G4E_1_SDR_e"/>
    <property type="match status" value="1"/>
</dbReference>
<dbReference type="Gene3D" id="3.40.50.720">
    <property type="entry name" value="NAD(P)-binding Rossmann-like Domain"/>
    <property type="match status" value="1"/>
</dbReference>
<dbReference type="Gene3D" id="3.90.25.10">
    <property type="entry name" value="UDP-galactose 4-epimerase, domain 1"/>
    <property type="match status" value="1"/>
</dbReference>
<dbReference type="InterPro" id="IPR001509">
    <property type="entry name" value="Epimerase_deHydtase"/>
</dbReference>
<dbReference type="InterPro" id="IPR036291">
    <property type="entry name" value="NAD(P)-bd_dom_sf"/>
</dbReference>
<dbReference type="InterPro" id="IPR005886">
    <property type="entry name" value="UDP_G4E"/>
</dbReference>
<dbReference type="NCBIfam" id="TIGR01179">
    <property type="entry name" value="galE"/>
    <property type="match status" value="1"/>
</dbReference>
<dbReference type="NCBIfam" id="NF007956">
    <property type="entry name" value="PRK10675.1"/>
    <property type="match status" value="1"/>
</dbReference>
<dbReference type="PANTHER" id="PTHR43725">
    <property type="entry name" value="UDP-GLUCOSE 4-EPIMERASE"/>
    <property type="match status" value="1"/>
</dbReference>
<dbReference type="PANTHER" id="PTHR43725:SF47">
    <property type="entry name" value="UDP-GLUCOSE 4-EPIMERASE"/>
    <property type="match status" value="1"/>
</dbReference>
<dbReference type="Pfam" id="PF01370">
    <property type="entry name" value="Epimerase"/>
    <property type="match status" value="1"/>
</dbReference>
<dbReference type="SUPFAM" id="SSF51735">
    <property type="entry name" value="NAD(P)-binding Rossmann-fold domains"/>
    <property type="match status" value="1"/>
</dbReference>
<comment type="function">
    <text evidence="2">Involved in the metabolism of galactose. Plays an essential role in the incorporation of galactose into meningococcal lipopolysaccharide surface molecules, which are important for pathogenesis. Catalyzes the conversion of UDP-galactose (UDP-Gal) to UDP-glucose (UDP-Glc) through a mechanism involving the transient reduction of NAD.</text>
</comment>
<comment type="catalytic activity">
    <reaction>
        <text>UDP-alpha-D-glucose = UDP-alpha-D-galactose</text>
        <dbReference type="Rhea" id="RHEA:22168"/>
        <dbReference type="ChEBI" id="CHEBI:58885"/>
        <dbReference type="ChEBI" id="CHEBI:66914"/>
        <dbReference type="EC" id="5.1.3.2"/>
    </reaction>
</comment>
<comment type="cofactor">
    <cofactor evidence="1">
        <name>NAD(+)</name>
        <dbReference type="ChEBI" id="CHEBI:57540"/>
    </cofactor>
</comment>
<comment type="pathway">
    <text>Carbohydrate metabolism; galactose metabolism.</text>
</comment>
<comment type="subunit">
    <text evidence="1">Homodimer.</text>
</comment>
<comment type="similarity">
    <text evidence="3">Belongs to the NAD(P)-dependent epimerase/dehydratase family.</text>
</comment>
<evidence type="ECO:0000250" key="1"/>
<evidence type="ECO:0000269" key="2">
    <source>
    </source>
</evidence>
<evidence type="ECO:0000305" key="3"/>
<gene>
    <name type="primary">galE</name>
</gene>
<reference key="1">
    <citation type="journal article" date="1995" name="Infect. Immun.">
        <title>Microheterogeneity of Neisseria lipooligosaccharide: analysis of a UDP-glucose 4-epimerase mutant of Neisseria meningitidis NMB.</title>
        <authorList>
            <person name="Lee F.K."/>
            <person name="Stephens D.S."/>
            <person name="Gibson B.W."/>
            <person name="Engstrom J.J."/>
            <person name="Zhou D."/>
            <person name="Apicella M.A."/>
        </authorList>
    </citation>
    <scope>NUCLEOTIDE SEQUENCE [GENOMIC DNA]</scope>
    <scope>FUNCTION</scope>
    <source>
        <strain>FAM20 / Serogroup C</strain>
    </source>
</reference>
<name>GALE_NEIMC</name>
<keyword id="KW-0119">Carbohydrate metabolism</keyword>
<keyword id="KW-0299">Galactose metabolism</keyword>
<keyword id="KW-0413">Isomerase</keyword>
<keyword id="KW-0520">NAD</keyword>
<proteinExistence type="inferred from homology"/>
<accession>P56986</accession>
<accession>Q59617</accession>
<accession>Q59624</accession>